<keyword id="KW-0249">Electron transport</keyword>
<keyword id="KW-0472">Membrane</keyword>
<keyword id="KW-0496">Mitochondrion</keyword>
<keyword id="KW-0999">Mitochondrion inner membrane</keyword>
<keyword id="KW-0520">NAD</keyword>
<keyword id="KW-0679">Respiratory chain</keyword>
<keyword id="KW-1278">Translocase</keyword>
<keyword id="KW-0812">Transmembrane</keyword>
<keyword id="KW-1133">Transmembrane helix</keyword>
<keyword id="KW-0813">Transport</keyword>
<keyword id="KW-0830">Ubiquinone</keyword>
<comment type="function">
    <text evidence="1">Core subunit of the mitochondrial membrane respiratory chain NADH dehydrogenase (Complex I) that is believed to belong to the minimal assembly required for catalysis. Complex I functions in the transfer of electrons from NADH to the respiratory chain. The immediate electron acceptor for the enzyme is believed to be ubiquinone (By similarity).</text>
</comment>
<comment type="catalytic activity">
    <reaction>
        <text>a ubiquinone + NADH + 5 H(+)(in) = a ubiquinol + NAD(+) + 4 H(+)(out)</text>
        <dbReference type="Rhea" id="RHEA:29091"/>
        <dbReference type="Rhea" id="RHEA-COMP:9565"/>
        <dbReference type="Rhea" id="RHEA-COMP:9566"/>
        <dbReference type="ChEBI" id="CHEBI:15378"/>
        <dbReference type="ChEBI" id="CHEBI:16389"/>
        <dbReference type="ChEBI" id="CHEBI:17976"/>
        <dbReference type="ChEBI" id="CHEBI:57540"/>
        <dbReference type="ChEBI" id="CHEBI:57945"/>
        <dbReference type="EC" id="7.1.1.2"/>
    </reaction>
</comment>
<comment type="subcellular location">
    <subcellularLocation>
        <location evidence="1">Mitochondrion inner membrane</location>
        <topology evidence="1">Multi-pass membrane protein</topology>
    </subcellularLocation>
</comment>
<comment type="similarity">
    <text evidence="3">Belongs to the complex I subunit 5 family.</text>
</comment>
<feature type="chain" id="PRO_0000118143" description="NADH-ubiquinone oxidoreductase chain 5">
    <location>
        <begin position="1"/>
        <end position="654"/>
    </location>
</feature>
<feature type="transmembrane region" description="Helical" evidence="2">
    <location>
        <begin position="1"/>
        <end position="21"/>
    </location>
</feature>
<feature type="transmembrane region" description="Helical" evidence="2">
    <location>
        <begin position="30"/>
        <end position="50"/>
    </location>
</feature>
<feature type="transmembrane region" description="Helical" evidence="2">
    <location>
        <begin position="76"/>
        <end position="96"/>
    </location>
</feature>
<feature type="transmembrane region" description="Helical" evidence="2">
    <location>
        <begin position="113"/>
        <end position="133"/>
    </location>
</feature>
<feature type="transmembrane region" description="Helical" evidence="2">
    <location>
        <begin position="135"/>
        <end position="155"/>
    </location>
</feature>
<feature type="transmembrane region" description="Helical" evidence="2">
    <location>
        <begin position="178"/>
        <end position="198"/>
    </location>
</feature>
<feature type="transmembrane region" description="Helical" evidence="2">
    <location>
        <begin position="200"/>
        <end position="220"/>
    </location>
</feature>
<feature type="transmembrane region" description="Helical" evidence="2">
    <location>
        <begin position="241"/>
        <end position="261"/>
    </location>
</feature>
<feature type="transmembrane region" description="Helical" evidence="2">
    <location>
        <begin position="274"/>
        <end position="294"/>
    </location>
</feature>
<feature type="transmembrane region" description="Helical" evidence="2">
    <location>
        <begin position="301"/>
        <end position="320"/>
    </location>
</feature>
<feature type="transmembrane region" description="Helical" evidence="2">
    <location>
        <begin position="324"/>
        <end position="346"/>
    </location>
</feature>
<feature type="transmembrane region" description="Helical" evidence="2">
    <location>
        <begin position="365"/>
        <end position="385"/>
    </location>
</feature>
<feature type="transmembrane region" description="Helical" evidence="2">
    <location>
        <begin position="406"/>
        <end position="426"/>
    </location>
</feature>
<feature type="transmembrane region" description="Helical" evidence="2">
    <location>
        <begin position="451"/>
        <end position="471"/>
    </location>
</feature>
<feature type="transmembrane region" description="Helical" evidence="2">
    <location>
        <begin position="510"/>
        <end position="530"/>
    </location>
</feature>
<feature type="transmembrane region" description="Helical" evidence="2">
    <location>
        <begin position="612"/>
        <end position="632"/>
    </location>
</feature>
<accession>P50367</accession>
<organism>
    <name type="scientific">Rhizopus stolonifer</name>
    <name type="common">Rhizopus nigricans</name>
    <dbReference type="NCBI Taxonomy" id="4846"/>
    <lineage>
        <taxon>Eukaryota</taxon>
        <taxon>Fungi</taxon>
        <taxon>Fungi incertae sedis</taxon>
        <taxon>Mucoromycota</taxon>
        <taxon>Mucoromycotina</taxon>
        <taxon>Mucoromycetes</taxon>
        <taxon>Mucorales</taxon>
        <taxon>Mucorineae</taxon>
        <taxon>Rhizopodaceae</taxon>
        <taxon>Rhizopus</taxon>
    </lineage>
</organism>
<sequence length="654" mass="72819">MYLAILTLPLLSATVAGFLGRKIGKTGSHLITCSSLVLTALLALVAFYEVGLCGSPVSIKLMSWIDSEFLLVSWGFIYDSLTVSMLLPVLIVSALVHIYSTNYMSEDPHNQRFFAYLSMFTFFMLMLVTGDNYLVMFIGWEGVGISSYLLINFWFTRLQANKAAIKALVMNRVGDWGFSIGLWAIFWTFGNLDFTTVFSLAPFINEELITIISICLLVAAMGKSAQIGLHTWLPDAMEGPTPVSALIHAATMVTAGVYLLLRSSPILEFGSTALILITWVGALTAFFAATTGLLQNDLKRVIAYSTCSQLGLLFLVCGLSQYNVALFHLVNHAWFKALLFLSAGSVIHAMNDEQDLRKFGGLSRLLPFTYSMMVIGSLSLMALPFLTGFYSKDLIIELAYGHYSFSGNLVYWLASVAAVFTAMYSIRSLYLTFLGYPNGPKINYNNIHEAPLIMAIPLVVLAVFSIFFGYVTKDLFVGMGTDFYNNALFIHPNHSILVDTEFGLPMSMKFLPLIGSLLGTFGVLAIYWIFDELPNKFISTKLGRGIYRFFNQKYYFDNIYNNLLNKFLNFGYTTNKILDRGAIELVGPYGLVNVFKSASNKVSGLDSGFIPTYAMYIFNGLILFITLIFFIGDPRLFVLLLWAVFLLPNNTTQK</sequence>
<protein>
    <recommendedName>
        <fullName>NADH-ubiquinone oxidoreductase chain 5</fullName>
        <ecNumber>7.1.1.2</ecNumber>
    </recommendedName>
    <alternativeName>
        <fullName>NADH dehydrogenase subunit 5</fullName>
    </alternativeName>
</protein>
<dbReference type="EC" id="7.1.1.2"/>
<dbReference type="EMBL" id="U17011">
    <property type="protein sequence ID" value="AAA99062.1"/>
    <property type="molecule type" value="Genomic_DNA"/>
</dbReference>
<dbReference type="PIR" id="T14202">
    <property type="entry name" value="T14202"/>
</dbReference>
<dbReference type="SMR" id="P50367"/>
<dbReference type="GO" id="GO:0005743">
    <property type="term" value="C:mitochondrial inner membrane"/>
    <property type="evidence" value="ECO:0007669"/>
    <property type="project" value="UniProtKB-SubCell"/>
</dbReference>
<dbReference type="GO" id="GO:0008137">
    <property type="term" value="F:NADH dehydrogenase (ubiquinone) activity"/>
    <property type="evidence" value="ECO:0007669"/>
    <property type="project" value="UniProtKB-EC"/>
</dbReference>
<dbReference type="GO" id="GO:0042773">
    <property type="term" value="P:ATP synthesis coupled electron transport"/>
    <property type="evidence" value="ECO:0007669"/>
    <property type="project" value="InterPro"/>
</dbReference>
<dbReference type="GO" id="GO:0015990">
    <property type="term" value="P:electron transport coupled proton transport"/>
    <property type="evidence" value="ECO:0007669"/>
    <property type="project" value="TreeGrafter"/>
</dbReference>
<dbReference type="Gene3D" id="1.20.5.2700">
    <property type="match status" value="1"/>
</dbReference>
<dbReference type="InterPro" id="IPR010934">
    <property type="entry name" value="NADH_DH_su5_C"/>
</dbReference>
<dbReference type="InterPro" id="IPR018393">
    <property type="entry name" value="NADHpl_OxRdtase_5_subgr"/>
</dbReference>
<dbReference type="InterPro" id="IPR001750">
    <property type="entry name" value="ND/Mrp_TM"/>
</dbReference>
<dbReference type="InterPro" id="IPR003945">
    <property type="entry name" value="NU5C-like"/>
</dbReference>
<dbReference type="InterPro" id="IPR001516">
    <property type="entry name" value="Proton_antipo_N"/>
</dbReference>
<dbReference type="NCBIfam" id="TIGR01974">
    <property type="entry name" value="NDH_I_L"/>
    <property type="match status" value="1"/>
</dbReference>
<dbReference type="NCBIfam" id="NF005141">
    <property type="entry name" value="PRK06590.1"/>
    <property type="match status" value="1"/>
</dbReference>
<dbReference type="PANTHER" id="PTHR42829">
    <property type="entry name" value="NADH-UBIQUINONE OXIDOREDUCTASE CHAIN 5"/>
    <property type="match status" value="1"/>
</dbReference>
<dbReference type="PANTHER" id="PTHR42829:SF2">
    <property type="entry name" value="NADH-UBIQUINONE OXIDOREDUCTASE CHAIN 5"/>
    <property type="match status" value="1"/>
</dbReference>
<dbReference type="Pfam" id="PF06455">
    <property type="entry name" value="NADH5_C"/>
    <property type="match status" value="1"/>
</dbReference>
<dbReference type="Pfam" id="PF00361">
    <property type="entry name" value="Proton_antipo_M"/>
    <property type="match status" value="1"/>
</dbReference>
<dbReference type="Pfam" id="PF00662">
    <property type="entry name" value="Proton_antipo_N"/>
    <property type="match status" value="1"/>
</dbReference>
<dbReference type="PRINTS" id="PR01434">
    <property type="entry name" value="NADHDHGNASE5"/>
</dbReference>
<proteinExistence type="inferred from homology"/>
<reference key="1">
    <citation type="journal article" date="1995" name="Can. J. Bot.">
        <title>A robust fungal phylogeny using the mitochondrially encoded nad5 protein sequence.</title>
        <authorList>
            <person name="Paquin B."/>
            <person name="Roewer I."/>
            <person name="Wang Z."/>
            <person name="Lang B.F."/>
        </authorList>
    </citation>
    <scope>NUCLEOTIDE SEQUENCE [GENOMIC DNA]</scope>
    <source>
        <strain>DAOM 148428</strain>
    </source>
</reference>
<evidence type="ECO:0000250" key="1"/>
<evidence type="ECO:0000255" key="2"/>
<evidence type="ECO:0000305" key="3"/>
<gene>
    <name type="primary">ND5</name>
    <name type="synonym">NAD5</name>
</gene>
<geneLocation type="mitochondrion"/>
<name>NU5M_RHIST</name>